<dbReference type="EMBL" id="CP000942">
    <property type="protein sequence ID" value="ACA32954.1"/>
    <property type="molecule type" value="Genomic_DNA"/>
</dbReference>
<dbReference type="RefSeq" id="WP_006688933.1">
    <property type="nucleotide sequence ID" value="NC_010503.1"/>
</dbReference>
<dbReference type="SMR" id="B1AIR7"/>
<dbReference type="GeneID" id="29672551"/>
<dbReference type="KEGG" id="upa:UPA3_0287"/>
<dbReference type="HOGENOM" id="CLU_207223_1_0_14"/>
<dbReference type="Proteomes" id="UP000002162">
    <property type="component" value="Chromosome"/>
</dbReference>
<dbReference type="GO" id="GO:1990904">
    <property type="term" value="C:ribonucleoprotein complex"/>
    <property type="evidence" value="ECO:0007669"/>
    <property type="project" value="UniProtKB-KW"/>
</dbReference>
<dbReference type="GO" id="GO:0005840">
    <property type="term" value="C:ribosome"/>
    <property type="evidence" value="ECO:0007669"/>
    <property type="project" value="UniProtKB-KW"/>
</dbReference>
<dbReference type="GO" id="GO:0003735">
    <property type="term" value="F:structural constituent of ribosome"/>
    <property type="evidence" value="ECO:0007669"/>
    <property type="project" value="InterPro"/>
</dbReference>
<dbReference type="GO" id="GO:0006412">
    <property type="term" value="P:translation"/>
    <property type="evidence" value="ECO:0007669"/>
    <property type="project" value="UniProtKB-UniRule"/>
</dbReference>
<dbReference type="HAMAP" id="MF_00358">
    <property type="entry name" value="Ribosomal_bS21"/>
    <property type="match status" value="1"/>
</dbReference>
<dbReference type="InterPro" id="IPR001911">
    <property type="entry name" value="Ribosomal_bS21"/>
</dbReference>
<dbReference type="NCBIfam" id="TIGR00030">
    <property type="entry name" value="S21p"/>
    <property type="match status" value="1"/>
</dbReference>
<dbReference type="Pfam" id="PF01165">
    <property type="entry name" value="Ribosomal_S21"/>
    <property type="match status" value="1"/>
</dbReference>
<name>RS21_UREP2</name>
<organism>
    <name type="scientific">Ureaplasma parvum serovar 3 (strain ATCC 27815 / 27 / NCTC 11736)</name>
    <dbReference type="NCBI Taxonomy" id="505682"/>
    <lineage>
        <taxon>Bacteria</taxon>
        <taxon>Bacillati</taxon>
        <taxon>Mycoplasmatota</taxon>
        <taxon>Mycoplasmoidales</taxon>
        <taxon>Mycoplasmoidaceae</taxon>
        <taxon>Ureaplasma</taxon>
    </lineage>
</organism>
<reference key="1">
    <citation type="submission" date="2008-02" db="EMBL/GenBank/DDBJ databases">
        <title>Genome sequence of Ureaplasma parvum serovar 3.</title>
        <authorList>
            <person name="Methe B.A."/>
            <person name="Glass J."/>
            <person name="Waites K."/>
            <person name="Shrivastava S."/>
        </authorList>
    </citation>
    <scope>NUCLEOTIDE SEQUENCE [LARGE SCALE GENOMIC DNA]</scope>
    <source>
        <strain>ATCC 27815 / 27 / NCTC 11736</strain>
    </source>
</reference>
<evidence type="ECO:0000255" key="1">
    <source>
        <dbReference type="HAMAP-Rule" id="MF_00358"/>
    </source>
</evidence>
<evidence type="ECO:0000305" key="2"/>
<sequence length="55" mass="6661">MSRGVSVEGDLEKALKKFKRISNETKKDSKRHEYYLSPRIRRKEKIKEANKYRSF</sequence>
<comment type="similarity">
    <text evidence="1">Belongs to the bacterial ribosomal protein bS21 family.</text>
</comment>
<feature type="chain" id="PRO_1000079428" description="Small ribosomal subunit protein bS21">
    <location>
        <begin position="1"/>
        <end position="55"/>
    </location>
</feature>
<keyword id="KW-0687">Ribonucleoprotein</keyword>
<keyword id="KW-0689">Ribosomal protein</keyword>
<protein>
    <recommendedName>
        <fullName evidence="1">Small ribosomal subunit protein bS21</fullName>
    </recommendedName>
    <alternativeName>
        <fullName evidence="2">30S ribosomal protein S21</fullName>
    </alternativeName>
</protein>
<accession>B1AIR7</accession>
<proteinExistence type="inferred from homology"/>
<gene>
    <name evidence="1" type="primary">rpsU</name>
    <name type="ordered locus">UPA3_0287</name>
</gene>